<proteinExistence type="evidence at protein level"/>
<organism>
    <name type="scientific">Drosophila melanogaster</name>
    <name type="common">Fruit fly</name>
    <dbReference type="NCBI Taxonomy" id="7227"/>
    <lineage>
        <taxon>Eukaryota</taxon>
        <taxon>Metazoa</taxon>
        <taxon>Ecdysozoa</taxon>
        <taxon>Arthropoda</taxon>
        <taxon>Hexapoda</taxon>
        <taxon>Insecta</taxon>
        <taxon>Pterygota</taxon>
        <taxon>Neoptera</taxon>
        <taxon>Endopterygota</taxon>
        <taxon>Diptera</taxon>
        <taxon>Brachycera</taxon>
        <taxon>Muscomorpha</taxon>
        <taxon>Ephydroidea</taxon>
        <taxon>Drosophilidae</taxon>
        <taxon>Drosophila</taxon>
        <taxon>Sophophora</taxon>
    </lineage>
</organism>
<keyword id="KW-0217">Developmental protein</keyword>
<keyword id="KW-0238">DNA-binding</keyword>
<keyword id="KW-0539">Nucleus</keyword>
<keyword id="KW-1185">Reference proteome</keyword>
<keyword id="KW-0804">Transcription</keyword>
<keyword id="KW-0805">Transcription regulation</keyword>
<comment type="function">
    <text evidence="3 4 5">Transcription factor that induces gliogenesis. It determines the choice between glial and neuronal fates. Also has a role in the differentiation of the plasmatocyte/macrophage lineage of hemocytes.</text>
</comment>
<comment type="interaction">
    <interactant intactId="EBI-175874">
        <id>Q27403</id>
    </interactant>
    <interactant intactId="EBI-171756">
        <id>Q9VN10</id>
        <label>hkb</label>
    </interactant>
    <organismsDiffer>false</organismsDiffer>
    <experiments>2</experiments>
</comment>
<comment type="interaction">
    <interactant intactId="EBI-175874">
        <id>Q27403</id>
    </interactant>
    <interactant intactId="EBI-86340">
        <id>P68198</id>
        <label>Ubi-p63E</label>
    </interactant>
    <organismsDiffer>false</organismsDiffer>
    <experiments>2</experiments>
</comment>
<comment type="subcellular location">
    <subcellularLocation>
        <location evidence="1 4">Nucleus</location>
    </subcellularLocation>
</comment>
<comment type="tissue specificity">
    <text evidence="3 4">Expressed transiently in early glial cells.</text>
</comment>
<comment type="disruption phenotype">
    <text evidence="3">Flies exhibit failure of glia to differentiate in the CNS and in the PNS, glia are transformed into neurons. Ectopic expression causes neurons to transform to glia.</text>
</comment>
<feature type="chain" id="PRO_0000126652" description="Transcription factor glial cells missing">
    <location>
        <begin position="1"/>
        <end position="504"/>
    </location>
</feature>
<feature type="DNA-binding region" description="GCM" evidence="1">
    <location>
        <begin position="32"/>
        <end position="188"/>
    </location>
</feature>
<feature type="region of interest" description="Disordered" evidence="2">
    <location>
        <begin position="214"/>
        <end position="237"/>
    </location>
</feature>
<feature type="region of interest" description="Disordered" evidence="2">
    <location>
        <begin position="313"/>
        <end position="357"/>
    </location>
</feature>
<feature type="compositionally biased region" description="Polar residues" evidence="2">
    <location>
        <begin position="313"/>
        <end position="325"/>
    </location>
</feature>
<feature type="compositionally biased region" description="Low complexity" evidence="2">
    <location>
        <begin position="326"/>
        <end position="343"/>
    </location>
</feature>
<feature type="sequence conflict" description="In Ref. 1; AAC46912, 2; BAA10905 and 3; AAC47808." evidence="6" ref="1 2 3">
    <original>F</original>
    <variation>I</variation>
    <location>
        <position position="413"/>
    </location>
</feature>
<protein>
    <recommendedName>
        <fullName>Transcription factor glial cells missing</fullName>
    </recommendedName>
    <alternativeName>
        <fullName>Protein glide</fullName>
    </alternativeName>
</protein>
<evidence type="ECO:0000255" key="1">
    <source>
        <dbReference type="PROSITE-ProRule" id="PRU00245"/>
    </source>
</evidence>
<evidence type="ECO:0000256" key="2">
    <source>
        <dbReference type="SAM" id="MobiDB-lite"/>
    </source>
</evidence>
<evidence type="ECO:0000269" key="3">
    <source>
    </source>
</evidence>
<evidence type="ECO:0000269" key="4">
    <source>
    </source>
</evidence>
<evidence type="ECO:0000269" key="5">
    <source>
    </source>
</evidence>
<evidence type="ECO:0000305" key="6"/>
<sequence>MVLNGMPITMPVPMPVPMPVPSPPATKSRVAIDWDINDSKMPSVGEFDDFNDWSNGHCRLIYSVQSDEARKHASGWAMRNTNNHNVNILKKSCLGVLLCSAKCKLPNGASVHLRPAICDKARRKQQGKQCPNRNCNGRLEIQACRGHCGYPVTHFWRRDGNGIYFQAKGTHDHPRPEAKGSTEARRLLAGGRRVRSLAVMLARESALSDKLSSLRPTKRQAKTQSIQESKRRRMGASDVLETKQELVVPPTTYLPTSTPTHSTNFNQSQGSYVPAGQGSVISQWNREIHYETEDPCYANGMYSYDMLHSPLSAHSSTGSYYQENKPQQLQHSQYQQQLSPQQHVPVSYDPSQPISSSLQCGMPSYEICDDTSSLTSSSGYCSEDYGYYNGYLPNSLDVSNGSQSQNLSQDASFYTTSSEIFSVFESTLNGGGTSGVDLIYDEATAYQQHQQQGTFPHLTNYQQEPQDQMQSADYYYSNTGVDNSWNIQMDATYHPVNSTDPIYC</sequence>
<name>GCM_DROME</name>
<dbReference type="EMBL" id="U34039">
    <property type="protein sequence ID" value="AAC46912.1"/>
    <property type="molecule type" value="Genomic_DNA"/>
</dbReference>
<dbReference type="EMBL" id="D64040">
    <property type="protein sequence ID" value="BAA10905.1"/>
    <property type="molecule type" value="mRNA"/>
</dbReference>
<dbReference type="EMBL" id="U81164">
    <property type="protein sequence ID" value="AAC47808.1"/>
    <property type="molecule type" value="mRNA"/>
</dbReference>
<dbReference type="EMBL" id="AE014134">
    <property type="protein sequence ID" value="AAF52790.1"/>
    <property type="molecule type" value="Genomic_DNA"/>
</dbReference>
<dbReference type="EMBL" id="BT029286">
    <property type="protein sequence ID" value="ABK30923.1"/>
    <property type="molecule type" value="mRNA"/>
</dbReference>
<dbReference type="PIR" id="A57215">
    <property type="entry name" value="A57215"/>
</dbReference>
<dbReference type="RefSeq" id="NP_001260292.1">
    <property type="nucleotide sequence ID" value="NM_001273363.1"/>
</dbReference>
<dbReference type="RefSeq" id="NP_477108.1">
    <property type="nucleotide sequence ID" value="NM_057760.5"/>
</dbReference>
<dbReference type="BMRB" id="Q27403"/>
<dbReference type="SMR" id="Q27403"/>
<dbReference type="BioGRID" id="60376">
    <property type="interactions" value="62"/>
</dbReference>
<dbReference type="DIP" id="DIP-20508N"/>
<dbReference type="FunCoup" id="Q27403">
    <property type="interactions" value="50"/>
</dbReference>
<dbReference type="IntAct" id="Q27403">
    <property type="interactions" value="12"/>
</dbReference>
<dbReference type="MINT" id="Q27403"/>
<dbReference type="STRING" id="7227.FBpp0307464"/>
<dbReference type="PaxDb" id="7227-FBpp0079451"/>
<dbReference type="DNASU" id="34277"/>
<dbReference type="EnsemblMetazoa" id="FBtr0079855">
    <property type="protein sequence ID" value="FBpp0079451"/>
    <property type="gene ID" value="FBgn0014179"/>
</dbReference>
<dbReference type="EnsemblMetazoa" id="FBtr0335492">
    <property type="protein sequence ID" value="FBpp0307464"/>
    <property type="gene ID" value="FBgn0014179"/>
</dbReference>
<dbReference type="GeneID" id="34277"/>
<dbReference type="KEGG" id="dme:Dmel_CG12245"/>
<dbReference type="AGR" id="FB:FBgn0014179"/>
<dbReference type="CTD" id="34277"/>
<dbReference type="FlyBase" id="FBgn0014179">
    <property type="gene designation" value="gcm"/>
</dbReference>
<dbReference type="VEuPathDB" id="VectorBase:FBgn0014179"/>
<dbReference type="eggNOG" id="ENOG502QU2X">
    <property type="taxonomic scope" value="Eukaryota"/>
</dbReference>
<dbReference type="GeneTree" id="ENSGT00390000006777"/>
<dbReference type="HOGENOM" id="CLU_024014_0_0_1"/>
<dbReference type="InParanoid" id="Q27403"/>
<dbReference type="OMA" id="PLYESCD"/>
<dbReference type="OrthoDB" id="6241117at2759"/>
<dbReference type="PhylomeDB" id="Q27403"/>
<dbReference type="SignaLink" id="Q27403"/>
<dbReference type="BioGRID-ORCS" id="34277">
    <property type="hits" value="0 hits in 3 CRISPR screens"/>
</dbReference>
<dbReference type="GenomeRNAi" id="34277"/>
<dbReference type="PRO" id="PR:Q27403"/>
<dbReference type="Proteomes" id="UP000000803">
    <property type="component" value="Chromosome 2L"/>
</dbReference>
<dbReference type="Bgee" id="FBgn0014179">
    <property type="expression patterns" value="Expressed in head mesoderm (Drosophila) and 51 other cell types or tissues"/>
</dbReference>
<dbReference type="ExpressionAtlas" id="Q27403">
    <property type="expression patterns" value="baseline and differential"/>
</dbReference>
<dbReference type="GO" id="GO:0005634">
    <property type="term" value="C:nucleus"/>
    <property type="evidence" value="ECO:0000314"/>
    <property type="project" value="FlyBase"/>
</dbReference>
<dbReference type="GO" id="GO:0003677">
    <property type="term" value="F:DNA binding"/>
    <property type="evidence" value="ECO:0000314"/>
    <property type="project" value="FlyBase"/>
</dbReference>
<dbReference type="GO" id="GO:0001228">
    <property type="term" value="F:DNA-binding transcription activator activity, RNA polymerase II-specific"/>
    <property type="evidence" value="ECO:0000314"/>
    <property type="project" value="FlyBase"/>
</dbReference>
<dbReference type="GO" id="GO:0000981">
    <property type="term" value="F:DNA-binding transcription factor activity, RNA polymerase II-specific"/>
    <property type="evidence" value="ECO:0000318"/>
    <property type="project" value="GO_Central"/>
</dbReference>
<dbReference type="GO" id="GO:0000978">
    <property type="term" value="F:RNA polymerase II cis-regulatory region sequence-specific DNA binding"/>
    <property type="evidence" value="ECO:0000318"/>
    <property type="project" value="GO_Central"/>
</dbReference>
<dbReference type="GO" id="GO:0000977">
    <property type="term" value="F:RNA polymerase II transcription regulatory region sequence-specific DNA binding"/>
    <property type="evidence" value="ECO:0000314"/>
    <property type="project" value="FlyBase"/>
</dbReference>
<dbReference type="GO" id="GO:0048813">
    <property type="term" value="P:dendrite morphogenesis"/>
    <property type="evidence" value="ECO:0000304"/>
    <property type="project" value="FlyBase"/>
</dbReference>
<dbReference type="GO" id="GO:0035165">
    <property type="term" value="P:embryonic crystal cell differentiation"/>
    <property type="evidence" value="ECO:0000315"/>
    <property type="project" value="FlyBase"/>
</dbReference>
<dbReference type="GO" id="GO:0060857">
    <property type="term" value="P:establishment of glial blood-brain barrier"/>
    <property type="evidence" value="ECO:0000315"/>
    <property type="project" value="FlyBase"/>
</dbReference>
<dbReference type="GO" id="GO:0021782">
    <property type="term" value="P:glial cell development"/>
    <property type="evidence" value="ECO:0000315"/>
    <property type="project" value="FlyBase"/>
</dbReference>
<dbReference type="GO" id="GO:0010001">
    <property type="term" value="P:glial cell differentiation"/>
    <property type="evidence" value="ECO:0000315"/>
    <property type="project" value="FlyBase"/>
</dbReference>
<dbReference type="GO" id="GO:0007403">
    <property type="term" value="P:glial cell fate determination"/>
    <property type="evidence" value="ECO:0000315"/>
    <property type="project" value="FlyBase"/>
</dbReference>
<dbReference type="GO" id="GO:0042063">
    <property type="term" value="P:gliogenesis"/>
    <property type="evidence" value="ECO:0000315"/>
    <property type="project" value="FlyBase"/>
</dbReference>
<dbReference type="GO" id="GO:0007516">
    <property type="term" value="P:hemocyte development"/>
    <property type="evidence" value="ECO:0000304"/>
    <property type="project" value="FlyBase"/>
</dbReference>
<dbReference type="GO" id="GO:0042690">
    <property type="term" value="P:negative regulation of crystal cell differentiation"/>
    <property type="evidence" value="ECO:0000315"/>
    <property type="project" value="FlyBase"/>
</dbReference>
<dbReference type="GO" id="GO:0030182">
    <property type="term" value="P:neuron differentiation"/>
    <property type="evidence" value="ECO:0000315"/>
    <property type="project" value="FlyBase"/>
</dbReference>
<dbReference type="GO" id="GO:0042387">
    <property type="term" value="P:plasmatocyte differentiation"/>
    <property type="evidence" value="ECO:0000315"/>
    <property type="project" value="FlyBase"/>
</dbReference>
<dbReference type="GO" id="GO:0045893">
    <property type="term" value="P:positive regulation of DNA-templated transcription"/>
    <property type="evidence" value="ECO:0000314"/>
    <property type="project" value="FlyBase"/>
</dbReference>
<dbReference type="GO" id="GO:0010628">
    <property type="term" value="P:positive regulation of gene expression"/>
    <property type="evidence" value="ECO:0000314"/>
    <property type="project" value="FlyBase"/>
</dbReference>
<dbReference type="GO" id="GO:0045687">
    <property type="term" value="P:positive regulation of glial cell differentiation"/>
    <property type="evidence" value="ECO:0000315"/>
    <property type="project" value="FlyBase"/>
</dbReference>
<dbReference type="GO" id="GO:0060252">
    <property type="term" value="P:positive regulation of glial cell proliferation"/>
    <property type="evidence" value="ECO:0000315"/>
    <property type="project" value="FlyBase"/>
</dbReference>
<dbReference type="GO" id="GO:0045944">
    <property type="term" value="P:positive regulation of transcription by RNA polymerase II"/>
    <property type="evidence" value="ECO:0000315"/>
    <property type="project" value="FlyBase"/>
</dbReference>
<dbReference type="GO" id="GO:0035289">
    <property type="term" value="P:posterior head segmentation"/>
    <property type="evidence" value="ECO:0000315"/>
    <property type="project" value="FlyBase"/>
</dbReference>
<dbReference type="GO" id="GO:0010468">
    <property type="term" value="P:regulation of gene expression"/>
    <property type="evidence" value="ECO:0000315"/>
    <property type="project" value="FlyBase"/>
</dbReference>
<dbReference type="GO" id="GO:0045610">
    <property type="term" value="P:regulation of hemocyte differentiation"/>
    <property type="evidence" value="ECO:0000315"/>
    <property type="project" value="FlyBase"/>
</dbReference>
<dbReference type="GO" id="GO:0050764">
    <property type="term" value="P:regulation of phagocytosis"/>
    <property type="evidence" value="ECO:0000315"/>
    <property type="project" value="FlyBase"/>
</dbReference>
<dbReference type="GO" id="GO:0006357">
    <property type="term" value="P:regulation of transcription by RNA polymerase II"/>
    <property type="evidence" value="ECO:0000318"/>
    <property type="project" value="GO_Central"/>
</dbReference>
<dbReference type="GO" id="GO:0031290">
    <property type="term" value="P:retinal ganglion cell axon guidance"/>
    <property type="evidence" value="ECO:0000315"/>
    <property type="project" value="FlyBase"/>
</dbReference>
<dbReference type="Gene3D" id="2.20.25.670">
    <property type="entry name" value="GCM domain, large subdomain"/>
    <property type="match status" value="1"/>
</dbReference>
<dbReference type="Gene3D" id="3.30.70.3530">
    <property type="entry name" value="GCM motif"/>
    <property type="match status" value="1"/>
</dbReference>
<dbReference type="InterPro" id="IPR039791">
    <property type="entry name" value="GCM"/>
</dbReference>
<dbReference type="InterPro" id="IPR036115">
    <property type="entry name" value="GCM_dom_sf"/>
</dbReference>
<dbReference type="InterPro" id="IPR043020">
    <property type="entry name" value="GCM_large"/>
</dbReference>
<dbReference type="InterPro" id="IPR043021">
    <property type="entry name" value="GCM_small"/>
</dbReference>
<dbReference type="InterPro" id="IPR003902">
    <property type="entry name" value="Tscrpt_reg_GCM"/>
</dbReference>
<dbReference type="PANTHER" id="PTHR12414">
    <property type="entry name" value="GLIAL CELLS MISSING RELATED/GLIDE"/>
    <property type="match status" value="1"/>
</dbReference>
<dbReference type="PANTHER" id="PTHR12414:SF8">
    <property type="entry name" value="TRANSCRIPTION FACTOR GLIAL CELLS MISSING-RELATED"/>
    <property type="match status" value="1"/>
</dbReference>
<dbReference type="Pfam" id="PF03615">
    <property type="entry name" value="GCM"/>
    <property type="match status" value="1"/>
</dbReference>
<dbReference type="SUPFAM" id="SSF90073">
    <property type="entry name" value="GCM domain"/>
    <property type="match status" value="1"/>
</dbReference>
<dbReference type="PROSITE" id="PS50807">
    <property type="entry name" value="GCM"/>
    <property type="match status" value="1"/>
</dbReference>
<gene>
    <name type="primary">gcm</name>
    <name type="ORF">CG12245</name>
</gene>
<accession>Q27403</accession>
<accession>A0AVW8</accession>
<accession>Q9VLA5</accession>
<reference key="1">
    <citation type="journal article" date="1995" name="Cell">
        <title>Glial cells missing: a genetic switch that controls glial versus neuronal fate.</title>
        <authorList>
            <person name="Jones B.W."/>
            <person name="Fetter R.D."/>
            <person name="Tear G."/>
            <person name="Goodman C.S."/>
        </authorList>
    </citation>
    <scope>NUCLEOTIDE SEQUENCE [GENOMIC DNA]</scope>
    <scope>FUNCTION</scope>
    <scope>TISSUE SPECIFICITY</scope>
    <scope>DISRUPTION PHENOTYPE</scope>
</reference>
<reference key="2">
    <citation type="journal article" date="1995" name="Cell">
        <title>Glial cells missing: a binary switch between neuronal and glial determination in Drosophila.</title>
        <authorList>
            <person name="Hosoya T."/>
            <person name="Takizawa K."/>
            <person name="Nitta K."/>
            <person name="Hotta Y."/>
        </authorList>
    </citation>
    <scope>NUCLEOTIDE SEQUENCE [MRNA]</scope>
    <scope>FUNCTION</scope>
    <scope>SUBCELLULAR LOCATION</scope>
    <scope>TISSUE SPECIFICITY</scope>
    <source>
        <tissue>Embryo</tissue>
    </source>
</reference>
<reference key="3">
    <citation type="journal article" date="1997" name="Dev. Biol.">
        <title>Glide/gcm is expressed and required in the scavenger cell lineage.</title>
        <authorList>
            <person name="Bernardoni R."/>
            <person name="Vivancos V."/>
            <person name="Giangrande A."/>
        </authorList>
    </citation>
    <scope>NUCLEOTIDE SEQUENCE [MRNA]</scope>
    <scope>FUNCTION</scope>
    <source>
        <tissue>Embryo</tissue>
    </source>
</reference>
<reference key="4">
    <citation type="journal article" date="2000" name="Science">
        <title>The genome sequence of Drosophila melanogaster.</title>
        <authorList>
            <person name="Adams M.D."/>
            <person name="Celniker S.E."/>
            <person name="Holt R.A."/>
            <person name="Evans C.A."/>
            <person name="Gocayne J.D."/>
            <person name="Amanatides P.G."/>
            <person name="Scherer S.E."/>
            <person name="Li P.W."/>
            <person name="Hoskins R.A."/>
            <person name="Galle R.F."/>
            <person name="George R.A."/>
            <person name="Lewis S.E."/>
            <person name="Richards S."/>
            <person name="Ashburner M."/>
            <person name="Henderson S.N."/>
            <person name="Sutton G.G."/>
            <person name="Wortman J.R."/>
            <person name="Yandell M.D."/>
            <person name="Zhang Q."/>
            <person name="Chen L.X."/>
            <person name="Brandon R.C."/>
            <person name="Rogers Y.-H.C."/>
            <person name="Blazej R.G."/>
            <person name="Champe M."/>
            <person name="Pfeiffer B.D."/>
            <person name="Wan K.H."/>
            <person name="Doyle C."/>
            <person name="Baxter E.G."/>
            <person name="Helt G."/>
            <person name="Nelson C.R."/>
            <person name="Miklos G.L.G."/>
            <person name="Abril J.F."/>
            <person name="Agbayani A."/>
            <person name="An H.-J."/>
            <person name="Andrews-Pfannkoch C."/>
            <person name="Baldwin D."/>
            <person name="Ballew R.M."/>
            <person name="Basu A."/>
            <person name="Baxendale J."/>
            <person name="Bayraktaroglu L."/>
            <person name="Beasley E.M."/>
            <person name="Beeson K.Y."/>
            <person name="Benos P.V."/>
            <person name="Berman B.P."/>
            <person name="Bhandari D."/>
            <person name="Bolshakov S."/>
            <person name="Borkova D."/>
            <person name="Botchan M.R."/>
            <person name="Bouck J."/>
            <person name="Brokstein P."/>
            <person name="Brottier P."/>
            <person name="Burtis K.C."/>
            <person name="Busam D.A."/>
            <person name="Butler H."/>
            <person name="Cadieu E."/>
            <person name="Center A."/>
            <person name="Chandra I."/>
            <person name="Cherry J.M."/>
            <person name="Cawley S."/>
            <person name="Dahlke C."/>
            <person name="Davenport L.B."/>
            <person name="Davies P."/>
            <person name="de Pablos B."/>
            <person name="Delcher A."/>
            <person name="Deng Z."/>
            <person name="Mays A.D."/>
            <person name="Dew I."/>
            <person name="Dietz S.M."/>
            <person name="Dodson K."/>
            <person name="Doup L.E."/>
            <person name="Downes M."/>
            <person name="Dugan-Rocha S."/>
            <person name="Dunkov B.C."/>
            <person name="Dunn P."/>
            <person name="Durbin K.J."/>
            <person name="Evangelista C.C."/>
            <person name="Ferraz C."/>
            <person name="Ferriera S."/>
            <person name="Fleischmann W."/>
            <person name="Fosler C."/>
            <person name="Gabrielian A.E."/>
            <person name="Garg N.S."/>
            <person name="Gelbart W.M."/>
            <person name="Glasser K."/>
            <person name="Glodek A."/>
            <person name="Gong F."/>
            <person name="Gorrell J.H."/>
            <person name="Gu Z."/>
            <person name="Guan P."/>
            <person name="Harris M."/>
            <person name="Harris N.L."/>
            <person name="Harvey D.A."/>
            <person name="Heiman T.J."/>
            <person name="Hernandez J.R."/>
            <person name="Houck J."/>
            <person name="Hostin D."/>
            <person name="Houston K.A."/>
            <person name="Howland T.J."/>
            <person name="Wei M.-H."/>
            <person name="Ibegwam C."/>
            <person name="Jalali M."/>
            <person name="Kalush F."/>
            <person name="Karpen G.H."/>
            <person name="Ke Z."/>
            <person name="Kennison J.A."/>
            <person name="Ketchum K.A."/>
            <person name="Kimmel B.E."/>
            <person name="Kodira C.D."/>
            <person name="Kraft C.L."/>
            <person name="Kravitz S."/>
            <person name="Kulp D."/>
            <person name="Lai Z."/>
            <person name="Lasko P."/>
            <person name="Lei Y."/>
            <person name="Levitsky A.A."/>
            <person name="Li J.H."/>
            <person name="Li Z."/>
            <person name="Liang Y."/>
            <person name="Lin X."/>
            <person name="Liu X."/>
            <person name="Mattei B."/>
            <person name="McIntosh T.C."/>
            <person name="McLeod M.P."/>
            <person name="McPherson D."/>
            <person name="Merkulov G."/>
            <person name="Milshina N.V."/>
            <person name="Mobarry C."/>
            <person name="Morris J."/>
            <person name="Moshrefi A."/>
            <person name="Mount S.M."/>
            <person name="Moy M."/>
            <person name="Murphy B."/>
            <person name="Murphy L."/>
            <person name="Muzny D.M."/>
            <person name="Nelson D.L."/>
            <person name="Nelson D.R."/>
            <person name="Nelson K.A."/>
            <person name="Nixon K."/>
            <person name="Nusskern D.R."/>
            <person name="Pacleb J.M."/>
            <person name="Palazzolo M."/>
            <person name="Pittman G.S."/>
            <person name="Pan S."/>
            <person name="Pollard J."/>
            <person name="Puri V."/>
            <person name="Reese M.G."/>
            <person name="Reinert K."/>
            <person name="Remington K."/>
            <person name="Saunders R.D.C."/>
            <person name="Scheeler F."/>
            <person name="Shen H."/>
            <person name="Shue B.C."/>
            <person name="Siden-Kiamos I."/>
            <person name="Simpson M."/>
            <person name="Skupski M.P."/>
            <person name="Smith T.J."/>
            <person name="Spier E."/>
            <person name="Spradling A.C."/>
            <person name="Stapleton M."/>
            <person name="Strong R."/>
            <person name="Sun E."/>
            <person name="Svirskas R."/>
            <person name="Tector C."/>
            <person name="Turner R."/>
            <person name="Venter E."/>
            <person name="Wang A.H."/>
            <person name="Wang X."/>
            <person name="Wang Z.-Y."/>
            <person name="Wassarman D.A."/>
            <person name="Weinstock G.M."/>
            <person name="Weissenbach J."/>
            <person name="Williams S.M."/>
            <person name="Woodage T."/>
            <person name="Worley K.C."/>
            <person name="Wu D."/>
            <person name="Yang S."/>
            <person name="Yao Q.A."/>
            <person name="Ye J."/>
            <person name="Yeh R.-F."/>
            <person name="Zaveri J.S."/>
            <person name="Zhan M."/>
            <person name="Zhang G."/>
            <person name="Zhao Q."/>
            <person name="Zheng L."/>
            <person name="Zheng X.H."/>
            <person name="Zhong F.N."/>
            <person name="Zhong W."/>
            <person name="Zhou X."/>
            <person name="Zhu S.C."/>
            <person name="Zhu X."/>
            <person name="Smith H.O."/>
            <person name="Gibbs R.A."/>
            <person name="Myers E.W."/>
            <person name="Rubin G.M."/>
            <person name="Venter J.C."/>
        </authorList>
    </citation>
    <scope>NUCLEOTIDE SEQUENCE [LARGE SCALE GENOMIC DNA]</scope>
    <source>
        <strain>Berkeley</strain>
    </source>
</reference>
<reference key="5">
    <citation type="journal article" date="2002" name="Genome Biol.">
        <title>Annotation of the Drosophila melanogaster euchromatic genome: a systematic review.</title>
        <authorList>
            <person name="Misra S."/>
            <person name="Crosby M.A."/>
            <person name="Mungall C.J."/>
            <person name="Matthews B.B."/>
            <person name="Campbell K.S."/>
            <person name="Hradecky P."/>
            <person name="Huang Y."/>
            <person name="Kaminker J.S."/>
            <person name="Millburn G.H."/>
            <person name="Prochnik S.E."/>
            <person name="Smith C.D."/>
            <person name="Tupy J.L."/>
            <person name="Whitfield E.J."/>
            <person name="Bayraktaroglu L."/>
            <person name="Berman B.P."/>
            <person name="Bettencourt B.R."/>
            <person name="Celniker S.E."/>
            <person name="de Grey A.D.N.J."/>
            <person name="Drysdale R.A."/>
            <person name="Harris N.L."/>
            <person name="Richter J."/>
            <person name="Russo S."/>
            <person name="Schroeder A.J."/>
            <person name="Shu S.Q."/>
            <person name="Stapleton M."/>
            <person name="Yamada C."/>
            <person name="Ashburner M."/>
            <person name="Gelbart W.M."/>
            <person name="Rubin G.M."/>
            <person name="Lewis S.E."/>
        </authorList>
    </citation>
    <scope>GENOME REANNOTATION</scope>
    <source>
        <strain>Berkeley</strain>
    </source>
</reference>
<reference key="6">
    <citation type="submission" date="2006-10" db="EMBL/GenBank/DDBJ databases">
        <authorList>
            <person name="Stapleton M."/>
            <person name="Carlson J.W."/>
            <person name="Frise E."/>
            <person name="Kapadia B."/>
            <person name="Park S."/>
            <person name="Wan K.H."/>
            <person name="Yu C."/>
            <person name="Celniker S.E."/>
        </authorList>
    </citation>
    <scope>NUCLEOTIDE SEQUENCE [LARGE SCALE MRNA]</scope>
    <source>
        <strain>Berkeley</strain>
        <tissue>Testis</tissue>
    </source>
</reference>